<accession>B7IA39</accession>
<evidence type="ECO:0000255" key="1">
    <source>
        <dbReference type="HAMAP-Rule" id="MF_01325"/>
    </source>
</evidence>
<evidence type="ECO:0000256" key="2">
    <source>
        <dbReference type="SAM" id="MobiDB-lite"/>
    </source>
</evidence>
<evidence type="ECO:0000305" key="3"/>
<evidence type="ECO:0007829" key="4">
    <source>
        <dbReference type="PDB" id="7M4V"/>
    </source>
</evidence>
<name>RL3_ACIB5</name>
<sequence>MAIGLVGRKCGMTRIFTDAGVSVPVTVIEVDPNRITQIKTLETDGYQAVQVTTGERRESRVTNAQKGHFAKAGVAAGRLVKEFRVTEAELEGREVGGTIGVDLFTVGQIVDVTGQSKGKGFQGGVKRWNFRTQDATHGNSVSHRVLGSTGQNQTPGRVFKGKKMAGHLGDERVTVQGLEIVSVDTERSVLVVKGAIPGATGGDVIVRPTIKA</sequence>
<dbReference type="EMBL" id="CP001182">
    <property type="protein sequence ID" value="ACJ42897.1"/>
    <property type="molecule type" value="Genomic_DNA"/>
</dbReference>
<dbReference type="RefSeq" id="WP_001982642.1">
    <property type="nucleotide sequence ID" value="NC_011586.2"/>
</dbReference>
<dbReference type="PDB" id="6V39">
    <property type="method" value="EM"/>
    <property type="resolution" value="3.04 A"/>
    <property type="chains" value="D=1-212"/>
</dbReference>
<dbReference type="PDB" id="6V3A">
    <property type="method" value="EM"/>
    <property type="resolution" value="2.82 A"/>
    <property type="chains" value="D=1-212"/>
</dbReference>
<dbReference type="PDB" id="6V3B">
    <property type="method" value="EM"/>
    <property type="resolution" value="2.91 A"/>
    <property type="chains" value="D=1-212"/>
</dbReference>
<dbReference type="PDB" id="6V3D">
    <property type="method" value="EM"/>
    <property type="resolution" value="2.95 A"/>
    <property type="chains" value="D=1-212"/>
</dbReference>
<dbReference type="PDB" id="7M4V">
    <property type="method" value="EM"/>
    <property type="resolution" value="2.54 A"/>
    <property type="chains" value="D=1-212"/>
</dbReference>
<dbReference type="PDB" id="7M4W">
    <property type="method" value="EM"/>
    <property type="resolution" value="2.55 A"/>
    <property type="chains" value="D=1-212"/>
</dbReference>
<dbReference type="PDB" id="7M4X">
    <property type="method" value="EM"/>
    <property type="resolution" value="2.66 A"/>
    <property type="chains" value="D=1-212"/>
</dbReference>
<dbReference type="PDB" id="7M4Y">
    <property type="method" value="EM"/>
    <property type="resolution" value="2.50 A"/>
    <property type="chains" value="D=1-212"/>
</dbReference>
<dbReference type="PDB" id="7M4Z">
    <property type="method" value="EM"/>
    <property type="resolution" value="2.92 A"/>
    <property type="chains" value="D=1-212"/>
</dbReference>
<dbReference type="PDB" id="7RYF">
    <property type="method" value="EM"/>
    <property type="resolution" value="2.65 A"/>
    <property type="chains" value="D=1-212"/>
</dbReference>
<dbReference type="PDB" id="7RYG">
    <property type="method" value="EM"/>
    <property type="resolution" value="2.38 A"/>
    <property type="chains" value="D=1-212"/>
</dbReference>
<dbReference type="PDB" id="7RYH">
    <property type="method" value="EM"/>
    <property type="resolution" value="2.43 A"/>
    <property type="chains" value="D=1-212"/>
</dbReference>
<dbReference type="PDB" id="7UVV">
    <property type="method" value="EM"/>
    <property type="resolution" value="2.50 A"/>
    <property type="chains" value="D=1-212"/>
</dbReference>
<dbReference type="PDB" id="7UVW">
    <property type="method" value="EM"/>
    <property type="resolution" value="2.37 A"/>
    <property type="chains" value="D=1-212"/>
</dbReference>
<dbReference type="PDB" id="7UVX">
    <property type="method" value="EM"/>
    <property type="resolution" value="2.35 A"/>
    <property type="chains" value="D=1-212"/>
</dbReference>
<dbReference type="PDB" id="7UVY">
    <property type="method" value="EM"/>
    <property type="resolution" value="2.39 A"/>
    <property type="chains" value="D=1-212"/>
</dbReference>
<dbReference type="PDB" id="7UVZ">
    <property type="method" value="EM"/>
    <property type="resolution" value="2.21 A"/>
    <property type="chains" value="D=1-212"/>
</dbReference>
<dbReference type="PDB" id="7UW1">
    <property type="method" value="EM"/>
    <property type="resolution" value="2.21 A"/>
    <property type="chains" value="D=1-212"/>
</dbReference>
<dbReference type="PDBsum" id="6V39"/>
<dbReference type="PDBsum" id="6V3A"/>
<dbReference type="PDBsum" id="6V3B"/>
<dbReference type="PDBsum" id="6V3D"/>
<dbReference type="PDBsum" id="7M4V"/>
<dbReference type="PDBsum" id="7M4W"/>
<dbReference type="PDBsum" id="7M4X"/>
<dbReference type="PDBsum" id="7M4Y"/>
<dbReference type="PDBsum" id="7M4Z"/>
<dbReference type="PDBsum" id="7RYF"/>
<dbReference type="PDBsum" id="7RYG"/>
<dbReference type="PDBsum" id="7RYH"/>
<dbReference type="PDBsum" id="7UVV"/>
<dbReference type="PDBsum" id="7UVW"/>
<dbReference type="PDBsum" id="7UVX"/>
<dbReference type="PDBsum" id="7UVY"/>
<dbReference type="PDBsum" id="7UVZ"/>
<dbReference type="PDBsum" id="7UW1"/>
<dbReference type="EMDB" id="EMD-21030"/>
<dbReference type="EMDB" id="EMD-21031"/>
<dbReference type="EMDB" id="EMD-21032"/>
<dbReference type="EMDB" id="EMD-21033"/>
<dbReference type="EMDB" id="EMD-23667"/>
<dbReference type="EMDB" id="EMD-23668"/>
<dbReference type="EMDB" id="EMD-23669"/>
<dbReference type="EMDB" id="EMD-23670"/>
<dbReference type="EMDB" id="EMD-23671"/>
<dbReference type="EMDB" id="EMD-24738"/>
<dbReference type="EMDB" id="EMD-24739"/>
<dbReference type="EMDB" id="EMD-24740"/>
<dbReference type="EMDB" id="EMD-26817"/>
<dbReference type="EMDB" id="EMD-26818"/>
<dbReference type="EMDB" id="EMD-26819"/>
<dbReference type="EMDB" id="EMD-26820"/>
<dbReference type="EMDB" id="EMD-26821"/>
<dbReference type="EMDB" id="EMD-26822"/>
<dbReference type="SMR" id="B7IA39"/>
<dbReference type="IntAct" id="B7IA39">
    <property type="interactions" value="2"/>
</dbReference>
<dbReference type="GeneID" id="92895317"/>
<dbReference type="KEGG" id="abn:AB57_3530"/>
<dbReference type="HOGENOM" id="CLU_044142_4_1_6"/>
<dbReference type="Proteomes" id="UP000007094">
    <property type="component" value="Chromosome"/>
</dbReference>
<dbReference type="GO" id="GO:0022625">
    <property type="term" value="C:cytosolic large ribosomal subunit"/>
    <property type="evidence" value="ECO:0007669"/>
    <property type="project" value="TreeGrafter"/>
</dbReference>
<dbReference type="GO" id="GO:0019843">
    <property type="term" value="F:rRNA binding"/>
    <property type="evidence" value="ECO:0007669"/>
    <property type="project" value="UniProtKB-UniRule"/>
</dbReference>
<dbReference type="GO" id="GO:0003735">
    <property type="term" value="F:structural constituent of ribosome"/>
    <property type="evidence" value="ECO:0007669"/>
    <property type="project" value="InterPro"/>
</dbReference>
<dbReference type="GO" id="GO:0006412">
    <property type="term" value="P:translation"/>
    <property type="evidence" value="ECO:0007669"/>
    <property type="project" value="UniProtKB-UniRule"/>
</dbReference>
<dbReference type="FunFam" id="2.40.30.10:FF:000004">
    <property type="entry name" value="50S ribosomal protein L3"/>
    <property type="match status" value="1"/>
</dbReference>
<dbReference type="FunFam" id="3.30.160.810:FF:000001">
    <property type="entry name" value="50S ribosomal protein L3"/>
    <property type="match status" value="1"/>
</dbReference>
<dbReference type="Gene3D" id="3.30.160.810">
    <property type="match status" value="1"/>
</dbReference>
<dbReference type="Gene3D" id="2.40.30.10">
    <property type="entry name" value="Translation factors"/>
    <property type="match status" value="1"/>
</dbReference>
<dbReference type="HAMAP" id="MF_01325_B">
    <property type="entry name" value="Ribosomal_uL3_B"/>
    <property type="match status" value="1"/>
</dbReference>
<dbReference type="InterPro" id="IPR000597">
    <property type="entry name" value="Ribosomal_uL3"/>
</dbReference>
<dbReference type="InterPro" id="IPR019927">
    <property type="entry name" value="Ribosomal_uL3_bac/org-type"/>
</dbReference>
<dbReference type="InterPro" id="IPR019926">
    <property type="entry name" value="Ribosomal_uL3_CS"/>
</dbReference>
<dbReference type="InterPro" id="IPR009000">
    <property type="entry name" value="Transl_B-barrel_sf"/>
</dbReference>
<dbReference type="NCBIfam" id="TIGR03625">
    <property type="entry name" value="L3_bact"/>
    <property type="match status" value="1"/>
</dbReference>
<dbReference type="PANTHER" id="PTHR11229">
    <property type="entry name" value="50S RIBOSOMAL PROTEIN L3"/>
    <property type="match status" value="1"/>
</dbReference>
<dbReference type="PANTHER" id="PTHR11229:SF16">
    <property type="entry name" value="LARGE RIBOSOMAL SUBUNIT PROTEIN UL3C"/>
    <property type="match status" value="1"/>
</dbReference>
<dbReference type="Pfam" id="PF00297">
    <property type="entry name" value="Ribosomal_L3"/>
    <property type="match status" value="1"/>
</dbReference>
<dbReference type="SUPFAM" id="SSF50447">
    <property type="entry name" value="Translation proteins"/>
    <property type="match status" value="1"/>
</dbReference>
<dbReference type="PROSITE" id="PS00474">
    <property type="entry name" value="RIBOSOMAL_L3"/>
    <property type="match status" value="1"/>
</dbReference>
<reference key="1">
    <citation type="journal article" date="2008" name="J. Bacteriol.">
        <title>Comparative genome sequence analysis of multidrug-resistant Acinetobacter baumannii.</title>
        <authorList>
            <person name="Adams M.D."/>
            <person name="Goglin K."/>
            <person name="Molyneaux N."/>
            <person name="Hujer K.M."/>
            <person name="Lavender H."/>
            <person name="Jamison J.J."/>
            <person name="MacDonald I.J."/>
            <person name="Martin K.M."/>
            <person name="Russo T."/>
            <person name="Campagnari A.A."/>
            <person name="Hujer A.M."/>
            <person name="Bonomo R.A."/>
            <person name="Gill S.R."/>
        </authorList>
    </citation>
    <scope>NUCLEOTIDE SEQUENCE [LARGE SCALE GENOMIC DNA]</scope>
    <source>
        <strain>AB0057</strain>
    </source>
</reference>
<organism>
    <name type="scientific">Acinetobacter baumannii (strain AB0057)</name>
    <dbReference type="NCBI Taxonomy" id="480119"/>
    <lineage>
        <taxon>Bacteria</taxon>
        <taxon>Pseudomonadati</taxon>
        <taxon>Pseudomonadota</taxon>
        <taxon>Gammaproteobacteria</taxon>
        <taxon>Moraxellales</taxon>
        <taxon>Moraxellaceae</taxon>
        <taxon>Acinetobacter</taxon>
        <taxon>Acinetobacter calcoaceticus/baumannii complex</taxon>
    </lineage>
</organism>
<keyword id="KW-0002">3D-structure</keyword>
<keyword id="KW-0488">Methylation</keyword>
<keyword id="KW-0687">Ribonucleoprotein</keyword>
<keyword id="KW-0689">Ribosomal protein</keyword>
<keyword id="KW-0694">RNA-binding</keyword>
<keyword id="KW-0699">rRNA-binding</keyword>
<gene>
    <name evidence="1" type="primary">rplC</name>
    <name type="ordered locus">AB57_3530</name>
</gene>
<protein>
    <recommendedName>
        <fullName evidence="1">Large ribosomal subunit protein uL3</fullName>
    </recommendedName>
    <alternativeName>
        <fullName evidence="3">50S ribosomal protein L3</fullName>
    </alternativeName>
</protein>
<feature type="chain" id="PRO_1000141808" description="Large ribosomal subunit protein uL3">
    <location>
        <begin position="1"/>
        <end position="212"/>
    </location>
</feature>
<feature type="region of interest" description="Disordered" evidence="2">
    <location>
        <begin position="136"/>
        <end position="155"/>
    </location>
</feature>
<feature type="modified residue" description="N5-methylglutamine" evidence="1">
    <location>
        <position position="153"/>
    </location>
</feature>
<feature type="strand" evidence="4">
    <location>
        <begin position="5"/>
        <end position="16"/>
    </location>
</feature>
<feature type="strand" evidence="4">
    <location>
        <begin position="22"/>
        <end position="29"/>
    </location>
</feature>
<feature type="strand" evidence="4">
    <location>
        <begin position="33"/>
        <end position="39"/>
    </location>
</feature>
<feature type="turn" evidence="4">
    <location>
        <begin position="41"/>
        <end position="44"/>
    </location>
</feature>
<feature type="strand" evidence="4">
    <location>
        <begin position="48"/>
        <end position="54"/>
    </location>
</feature>
<feature type="helix" evidence="4">
    <location>
        <begin position="58"/>
        <end position="60"/>
    </location>
</feature>
<feature type="helix" evidence="4">
    <location>
        <begin position="63"/>
        <end position="72"/>
    </location>
</feature>
<feature type="strand" evidence="4">
    <location>
        <begin position="78"/>
        <end position="84"/>
    </location>
</feature>
<feature type="helix" evidence="4">
    <location>
        <begin position="87"/>
        <end position="90"/>
    </location>
</feature>
<feature type="strand" evidence="4">
    <location>
        <begin position="109"/>
        <end position="115"/>
    </location>
</feature>
<feature type="strand" evidence="4">
    <location>
        <begin position="118"/>
        <end position="122"/>
    </location>
</feature>
<feature type="helix" evidence="4">
    <location>
        <begin position="124"/>
        <end position="128"/>
    </location>
</feature>
<feature type="strand" evidence="4">
    <location>
        <begin position="165"/>
        <end position="169"/>
    </location>
</feature>
<feature type="strand" evidence="4">
    <location>
        <begin position="171"/>
        <end position="184"/>
    </location>
</feature>
<feature type="turn" evidence="4">
    <location>
        <begin position="185"/>
        <end position="188"/>
    </location>
</feature>
<feature type="strand" evidence="4">
    <location>
        <begin position="189"/>
        <end position="194"/>
    </location>
</feature>
<feature type="strand" evidence="4">
    <location>
        <begin position="203"/>
        <end position="208"/>
    </location>
</feature>
<comment type="function">
    <text evidence="1">One of the primary rRNA binding proteins, it binds directly near the 3'-end of the 23S rRNA, where it nucleates assembly of the 50S subunit.</text>
</comment>
<comment type="subunit">
    <text evidence="1">Part of the 50S ribosomal subunit. Forms a cluster with proteins L14 and L19.</text>
</comment>
<comment type="PTM">
    <text evidence="1">Methylated by PrmB.</text>
</comment>
<comment type="similarity">
    <text evidence="1">Belongs to the universal ribosomal protein uL3 family.</text>
</comment>
<proteinExistence type="evidence at protein level"/>